<sequence length="137" mass="15492">MSDLPVAPTPAEPVKYGERAIEAGQLITFPNPRPGRDYDIHITLPEFTCKCPFSGYPDFATIYLTYVPHEKVVELKALKLYVNSFRDRYISHEEVVHVVLDDFVAAADPLRVQIKGDFNPRGNVHMVVEARHTRPGT</sequence>
<name>QUEF_GLOVI</name>
<dbReference type="EC" id="1.7.1.13" evidence="1"/>
<dbReference type="EMBL" id="BA000045">
    <property type="protein sequence ID" value="BAC91534.1"/>
    <property type="molecule type" value="Genomic_DNA"/>
</dbReference>
<dbReference type="RefSeq" id="NP_926539.1">
    <property type="nucleotide sequence ID" value="NC_005125.1"/>
</dbReference>
<dbReference type="RefSeq" id="WP_011143582.1">
    <property type="nucleotide sequence ID" value="NC_005125.1"/>
</dbReference>
<dbReference type="SMR" id="Q7NFD3"/>
<dbReference type="STRING" id="251221.gene:10761108"/>
<dbReference type="EnsemblBacteria" id="BAC91534">
    <property type="protein sequence ID" value="BAC91534"/>
    <property type="gene ID" value="BAC91534"/>
</dbReference>
<dbReference type="KEGG" id="gvi:gll3593"/>
<dbReference type="PATRIC" id="fig|251221.4.peg.3626"/>
<dbReference type="eggNOG" id="COG0780">
    <property type="taxonomic scope" value="Bacteria"/>
</dbReference>
<dbReference type="HOGENOM" id="CLU_102489_1_1_3"/>
<dbReference type="InParanoid" id="Q7NFD3"/>
<dbReference type="OrthoDB" id="9795077at2"/>
<dbReference type="PhylomeDB" id="Q7NFD3"/>
<dbReference type="UniPathway" id="UPA00392"/>
<dbReference type="Proteomes" id="UP000000557">
    <property type="component" value="Chromosome"/>
</dbReference>
<dbReference type="GO" id="GO:0005829">
    <property type="term" value="C:cytosol"/>
    <property type="evidence" value="ECO:0000318"/>
    <property type="project" value="GO_Central"/>
</dbReference>
<dbReference type="GO" id="GO:0033739">
    <property type="term" value="F:preQ1 synthase activity"/>
    <property type="evidence" value="ECO:0000318"/>
    <property type="project" value="GO_Central"/>
</dbReference>
<dbReference type="GO" id="GO:0008616">
    <property type="term" value="P:queuosine biosynthetic process"/>
    <property type="evidence" value="ECO:0000318"/>
    <property type="project" value="GO_Central"/>
</dbReference>
<dbReference type="GO" id="GO:0006400">
    <property type="term" value="P:tRNA modification"/>
    <property type="evidence" value="ECO:0007669"/>
    <property type="project" value="UniProtKB-UniRule"/>
</dbReference>
<dbReference type="Gene3D" id="3.30.1130.10">
    <property type="match status" value="1"/>
</dbReference>
<dbReference type="HAMAP" id="MF_00818">
    <property type="entry name" value="QueF_type1"/>
    <property type="match status" value="1"/>
</dbReference>
<dbReference type="InterPro" id="IPR043133">
    <property type="entry name" value="GTP-CH-I_C/QueF"/>
</dbReference>
<dbReference type="InterPro" id="IPR050084">
    <property type="entry name" value="NADPH_dep_7-cyano-7-deazaG_red"/>
</dbReference>
<dbReference type="InterPro" id="IPR029500">
    <property type="entry name" value="QueF"/>
</dbReference>
<dbReference type="InterPro" id="IPR016856">
    <property type="entry name" value="QueF_type1"/>
</dbReference>
<dbReference type="NCBIfam" id="TIGR03139">
    <property type="entry name" value="QueF-II"/>
    <property type="match status" value="1"/>
</dbReference>
<dbReference type="PANTHER" id="PTHR34354">
    <property type="entry name" value="NADPH-DEPENDENT 7-CYANO-7-DEAZAGUANINE REDUCTASE"/>
    <property type="match status" value="1"/>
</dbReference>
<dbReference type="PANTHER" id="PTHR34354:SF1">
    <property type="entry name" value="NADPH-DEPENDENT 7-CYANO-7-DEAZAGUANINE REDUCTASE"/>
    <property type="match status" value="1"/>
</dbReference>
<dbReference type="Pfam" id="PF14489">
    <property type="entry name" value="QueF"/>
    <property type="match status" value="1"/>
</dbReference>
<dbReference type="PIRSF" id="PIRSF027377">
    <property type="entry name" value="Nitrile_oxidored_QueF"/>
    <property type="match status" value="1"/>
</dbReference>
<dbReference type="SUPFAM" id="SSF55620">
    <property type="entry name" value="Tetrahydrobiopterin biosynthesis enzymes-like"/>
    <property type="match status" value="1"/>
</dbReference>
<protein>
    <recommendedName>
        <fullName evidence="1">NADPH-dependent 7-cyano-7-deazaguanine reductase</fullName>
        <ecNumber evidence="1">1.7.1.13</ecNumber>
    </recommendedName>
    <alternativeName>
        <fullName evidence="1">7-cyano-7-carbaguanine reductase</fullName>
    </alternativeName>
    <alternativeName>
        <fullName evidence="1">NADPH-dependent nitrile oxidoreductase</fullName>
    </alternativeName>
    <alternativeName>
        <fullName evidence="1">PreQ(0) reductase</fullName>
    </alternativeName>
</protein>
<comment type="function">
    <text evidence="1">Catalyzes the NADPH-dependent reduction of 7-cyano-7-deazaguanine (preQ0) to 7-aminomethyl-7-deazaguanine (preQ1).</text>
</comment>
<comment type="catalytic activity">
    <reaction evidence="1">
        <text>7-aminomethyl-7-carbaguanine + 2 NADP(+) = 7-cyano-7-deazaguanine + 2 NADPH + 3 H(+)</text>
        <dbReference type="Rhea" id="RHEA:13409"/>
        <dbReference type="ChEBI" id="CHEBI:15378"/>
        <dbReference type="ChEBI" id="CHEBI:45075"/>
        <dbReference type="ChEBI" id="CHEBI:57783"/>
        <dbReference type="ChEBI" id="CHEBI:58349"/>
        <dbReference type="ChEBI" id="CHEBI:58703"/>
        <dbReference type="EC" id="1.7.1.13"/>
    </reaction>
</comment>
<comment type="pathway">
    <text evidence="1">tRNA modification; tRNA-queuosine biosynthesis.</text>
</comment>
<comment type="subcellular location">
    <subcellularLocation>
        <location evidence="1">Cytoplasm</location>
    </subcellularLocation>
</comment>
<comment type="similarity">
    <text evidence="1">Belongs to the GTP cyclohydrolase I family. QueF type 1 subfamily.</text>
</comment>
<reference key="1">
    <citation type="journal article" date="2003" name="DNA Res.">
        <title>Complete genome structure of Gloeobacter violaceus PCC 7421, a cyanobacterium that lacks thylakoids.</title>
        <authorList>
            <person name="Nakamura Y."/>
            <person name="Kaneko T."/>
            <person name="Sato S."/>
            <person name="Mimuro M."/>
            <person name="Miyashita H."/>
            <person name="Tsuchiya T."/>
            <person name="Sasamoto S."/>
            <person name="Watanabe A."/>
            <person name="Kawashima K."/>
            <person name="Kishida Y."/>
            <person name="Kiyokawa C."/>
            <person name="Kohara M."/>
            <person name="Matsumoto M."/>
            <person name="Matsuno A."/>
            <person name="Nakazaki N."/>
            <person name="Shimpo S."/>
            <person name="Takeuchi C."/>
            <person name="Yamada M."/>
            <person name="Tabata S."/>
        </authorList>
    </citation>
    <scope>NUCLEOTIDE SEQUENCE [LARGE SCALE GENOMIC DNA]</scope>
    <source>
        <strain>ATCC 29082 / PCC 7421</strain>
    </source>
</reference>
<feature type="chain" id="PRO_0000162973" description="NADPH-dependent 7-cyano-7-deazaguanine reductase">
    <location>
        <begin position="1"/>
        <end position="137"/>
    </location>
</feature>
<feature type="active site" description="Thioimide intermediate" evidence="1">
    <location>
        <position position="51"/>
    </location>
</feature>
<feature type="active site" description="Proton donor" evidence="1">
    <location>
        <position position="58"/>
    </location>
</feature>
<feature type="binding site" evidence="1">
    <location>
        <begin position="73"/>
        <end position="75"/>
    </location>
    <ligand>
        <name>substrate</name>
    </ligand>
</feature>
<feature type="binding site" evidence="1">
    <location>
        <begin position="92"/>
        <end position="93"/>
    </location>
    <ligand>
        <name>substrate</name>
    </ligand>
</feature>
<proteinExistence type="inferred from homology"/>
<gene>
    <name evidence="1" type="primary">queF</name>
    <name type="ordered locus">gll3593</name>
</gene>
<organism>
    <name type="scientific">Gloeobacter violaceus (strain ATCC 29082 / PCC 7421)</name>
    <dbReference type="NCBI Taxonomy" id="251221"/>
    <lineage>
        <taxon>Bacteria</taxon>
        <taxon>Bacillati</taxon>
        <taxon>Cyanobacteriota</taxon>
        <taxon>Cyanophyceae</taxon>
        <taxon>Gloeobacterales</taxon>
        <taxon>Gloeobacteraceae</taxon>
        <taxon>Gloeobacter</taxon>
    </lineage>
</organism>
<evidence type="ECO:0000255" key="1">
    <source>
        <dbReference type="HAMAP-Rule" id="MF_00818"/>
    </source>
</evidence>
<accession>Q7NFD3</accession>
<keyword id="KW-0963">Cytoplasm</keyword>
<keyword id="KW-0521">NADP</keyword>
<keyword id="KW-0560">Oxidoreductase</keyword>
<keyword id="KW-0671">Queuosine biosynthesis</keyword>
<keyword id="KW-1185">Reference proteome</keyword>